<protein>
    <recommendedName>
        <fullName evidence="1">Protein-glutamate methylesterase/protein-glutamine glutaminase 3</fullName>
        <ecNumber evidence="1">3.1.1.61</ecNumber>
        <ecNumber evidence="1">3.5.1.44</ecNumber>
    </recommendedName>
</protein>
<reference key="1">
    <citation type="submission" date="2005-10" db="EMBL/GenBank/DDBJ databases">
        <title>Complete sequence of chromosome 1 of Burkholderia sp. 383.</title>
        <authorList>
            <consortium name="US DOE Joint Genome Institute"/>
            <person name="Copeland A."/>
            <person name="Lucas S."/>
            <person name="Lapidus A."/>
            <person name="Barry K."/>
            <person name="Detter J.C."/>
            <person name="Glavina T."/>
            <person name="Hammon N."/>
            <person name="Israni S."/>
            <person name="Pitluck S."/>
            <person name="Chain P."/>
            <person name="Malfatti S."/>
            <person name="Shin M."/>
            <person name="Vergez L."/>
            <person name="Schmutz J."/>
            <person name="Larimer F."/>
            <person name="Land M."/>
            <person name="Kyrpides N."/>
            <person name="Lykidis A."/>
            <person name="Richardson P."/>
        </authorList>
    </citation>
    <scope>NUCLEOTIDE SEQUENCE [LARGE SCALE GENOMIC DNA]</scope>
    <source>
        <strain>ATCC 17760 / DSM 23089 / LMG 22485 / NCIMB 9086 / R18194 / 383</strain>
    </source>
</reference>
<dbReference type="EC" id="3.1.1.61" evidence="1"/>
<dbReference type="EC" id="3.5.1.44" evidence="1"/>
<dbReference type="EMBL" id="CP000151">
    <property type="protein sequence ID" value="ABB06965.1"/>
    <property type="molecule type" value="Genomic_DNA"/>
</dbReference>
<dbReference type="RefSeq" id="WP_011350600.1">
    <property type="nucleotide sequence ID" value="NZ_CADFCT010000009.1"/>
</dbReference>
<dbReference type="SMR" id="Q39KQ1"/>
<dbReference type="GeneID" id="45093271"/>
<dbReference type="KEGG" id="bur:Bcep18194_A3363"/>
<dbReference type="PATRIC" id="fig|482957.22.peg.200"/>
<dbReference type="HOGENOM" id="CLU_000445_51_0_4"/>
<dbReference type="Proteomes" id="UP000002705">
    <property type="component" value="Chromosome 1"/>
</dbReference>
<dbReference type="GO" id="GO:0005737">
    <property type="term" value="C:cytoplasm"/>
    <property type="evidence" value="ECO:0007669"/>
    <property type="project" value="UniProtKB-SubCell"/>
</dbReference>
<dbReference type="GO" id="GO:0000156">
    <property type="term" value="F:phosphorelay response regulator activity"/>
    <property type="evidence" value="ECO:0007669"/>
    <property type="project" value="InterPro"/>
</dbReference>
<dbReference type="GO" id="GO:0008984">
    <property type="term" value="F:protein-glutamate methylesterase activity"/>
    <property type="evidence" value="ECO:0007669"/>
    <property type="project" value="UniProtKB-UniRule"/>
</dbReference>
<dbReference type="GO" id="GO:0050568">
    <property type="term" value="F:protein-glutamine glutaminase activity"/>
    <property type="evidence" value="ECO:0007669"/>
    <property type="project" value="UniProtKB-UniRule"/>
</dbReference>
<dbReference type="GO" id="GO:0006935">
    <property type="term" value="P:chemotaxis"/>
    <property type="evidence" value="ECO:0007669"/>
    <property type="project" value="UniProtKB-UniRule"/>
</dbReference>
<dbReference type="CDD" id="cd16432">
    <property type="entry name" value="CheB_Rec"/>
    <property type="match status" value="1"/>
</dbReference>
<dbReference type="CDD" id="cd17541">
    <property type="entry name" value="REC_CheB-like"/>
    <property type="match status" value="1"/>
</dbReference>
<dbReference type="FunFam" id="3.40.50.180:FF:000001">
    <property type="entry name" value="Protein-glutamate methylesterase/protein-glutamine glutaminase"/>
    <property type="match status" value="1"/>
</dbReference>
<dbReference type="FunFam" id="3.40.50.2300:FF:000060">
    <property type="entry name" value="Protein-glutamate methylesterase/protein-glutamine glutaminase"/>
    <property type="match status" value="1"/>
</dbReference>
<dbReference type="Gene3D" id="3.40.50.2300">
    <property type="match status" value="1"/>
</dbReference>
<dbReference type="Gene3D" id="3.40.50.180">
    <property type="entry name" value="Methylesterase CheB, C-terminal domain"/>
    <property type="match status" value="1"/>
</dbReference>
<dbReference type="HAMAP" id="MF_00099">
    <property type="entry name" value="CheB_chemtxs"/>
    <property type="match status" value="1"/>
</dbReference>
<dbReference type="InterPro" id="IPR008248">
    <property type="entry name" value="CheB-like"/>
</dbReference>
<dbReference type="InterPro" id="IPR035909">
    <property type="entry name" value="CheB_C"/>
</dbReference>
<dbReference type="InterPro" id="IPR011006">
    <property type="entry name" value="CheY-like_superfamily"/>
</dbReference>
<dbReference type="InterPro" id="IPR000673">
    <property type="entry name" value="Sig_transdc_resp-reg_Me-estase"/>
</dbReference>
<dbReference type="InterPro" id="IPR001789">
    <property type="entry name" value="Sig_transdc_resp-reg_receiver"/>
</dbReference>
<dbReference type="NCBIfam" id="NF001965">
    <property type="entry name" value="PRK00742.1"/>
    <property type="match status" value="1"/>
</dbReference>
<dbReference type="NCBIfam" id="NF009206">
    <property type="entry name" value="PRK12555.1"/>
    <property type="match status" value="1"/>
</dbReference>
<dbReference type="PANTHER" id="PTHR42872">
    <property type="entry name" value="PROTEIN-GLUTAMATE METHYLESTERASE/PROTEIN-GLUTAMINE GLUTAMINASE"/>
    <property type="match status" value="1"/>
</dbReference>
<dbReference type="PANTHER" id="PTHR42872:SF6">
    <property type="entry name" value="PROTEIN-GLUTAMATE METHYLESTERASE_PROTEIN-GLUTAMINE GLUTAMINASE"/>
    <property type="match status" value="1"/>
</dbReference>
<dbReference type="Pfam" id="PF01339">
    <property type="entry name" value="CheB_methylest"/>
    <property type="match status" value="1"/>
</dbReference>
<dbReference type="Pfam" id="PF00072">
    <property type="entry name" value="Response_reg"/>
    <property type="match status" value="1"/>
</dbReference>
<dbReference type="PIRSF" id="PIRSF000876">
    <property type="entry name" value="RR_chemtxs_CheB"/>
    <property type="match status" value="1"/>
</dbReference>
<dbReference type="SMART" id="SM00448">
    <property type="entry name" value="REC"/>
    <property type="match status" value="1"/>
</dbReference>
<dbReference type="SUPFAM" id="SSF52172">
    <property type="entry name" value="CheY-like"/>
    <property type="match status" value="1"/>
</dbReference>
<dbReference type="SUPFAM" id="SSF52738">
    <property type="entry name" value="Methylesterase CheB, C-terminal domain"/>
    <property type="match status" value="1"/>
</dbReference>
<dbReference type="PROSITE" id="PS50122">
    <property type="entry name" value="CHEB"/>
    <property type="match status" value="1"/>
</dbReference>
<dbReference type="PROSITE" id="PS50110">
    <property type="entry name" value="RESPONSE_REGULATORY"/>
    <property type="match status" value="1"/>
</dbReference>
<feature type="chain" id="PRO_0000225451" description="Protein-glutamate methylesterase/protein-glutamine glutaminase 3">
    <location>
        <begin position="1"/>
        <end position="363"/>
    </location>
</feature>
<feature type="domain" description="Response regulatory" evidence="1">
    <location>
        <begin position="8"/>
        <end position="125"/>
    </location>
</feature>
<feature type="domain" description="CheB-type methylesterase" evidence="1">
    <location>
        <begin position="164"/>
        <end position="356"/>
    </location>
</feature>
<feature type="active site" evidence="1">
    <location>
        <position position="176"/>
    </location>
</feature>
<feature type="active site" evidence="1">
    <location>
        <position position="202"/>
    </location>
</feature>
<feature type="active site" evidence="1">
    <location>
        <position position="298"/>
    </location>
</feature>
<feature type="modified residue" description="4-aspartylphosphate" evidence="1">
    <location>
        <position position="59"/>
    </location>
</feature>
<evidence type="ECO:0000255" key="1">
    <source>
        <dbReference type="HAMAP-Rule" id="MF_00099"/>
    </source>
</evidence>
<comment type="function">
    <text evidence="1">Involved in chemotaxis. Part of a chemotaxis signal transduction system that modulates chemotaxis in response to various stimuli. Catalyzes the demethylation of specific methylglutamate residues introduced into the chemoreceptors (methyl-accepting chemotaxis proteins or MCP) by CheR. Also mediates the irreversible deamidation of specific glutamine residues to glutamic acid.</text>
</comment>
<comment type="catalytic activity">
    <reaction evidence="1">
        <text>[protein]-L-glutamate 5-O-methyl ester + H2O = L-glutamyl-[protein] + methanol + H(+)</text>
        <dbReference type="Rhea" id="RHEA:23236"/>
        <dbReference type="Rhea" id="RHEA-COMP:10208"/>
        <dbReference type="Rhea" id="RHEA-COMP:10311"/>
        <dbReference type="ChEBI" id="CHEBI:15377"/>
        <dbReference type="ChEBI" id="CHEBI:15378"/>
        <dbReference type="ChEBI" id="CHEBI:17790"/>
        <dbReference type="ChEBI" id="CHEBI:29973"/>
        <dbReference type="ChEBI" id="CHEBI:82795"/>
        <dbReference type="EC" id="3.1.1.61"/>
    </reaction>
</comment>
<comment type="catalytic activity">
    <reaction evidence="1">
        <text>L-glutaminyl-[protein] + H2O = L-glutamyl-[protein] + NH4(+)</text>
        <dbReference type="Rhea" id="RHEA:16441"/>
        <dbReference type="Rhea" id="RHEA-COMP:10207"/>
        <dbReference type="Rhea" id="RHEA-COMP:10208"/>
        <dbReference type="ChEBI" id="CHEBI:15377"/>
        <dbReference type="ChEBI" id="CHEBI:28938"/>
        <dbReference type="ChEBI" id="CHEBI:29973"/>
        <dbReference type="ChEBI" id="CHEBI:30011"/>
        <dbReference type="EC" id="3.5.1.44"/>
    </reaction>
</comment>
<comment type="subcellular location">
    <subcellularLocation>
        <location evidence="1">Cytoplasm</location>
    </subcellularLocation>
</comment>
<comment type="domain">
    <text evidence="1">Contains a C-terminal catalytic domain, and an N-terminal region which modulates catalytic activity.</text>
</comment>
<comment type="PTM">
    <text evidence="1">Phosphorylated by CheA. Phosphorylation of the N-terminal regulatory domain activates the methylesterase activity.</text>
</comment>
<comment type="similarity">
    <text evidence="1">Belongs to the CheB family.</text>
</comment>
<proteinExistence type="inferred from homology"/>
<keyword id="KW-0145">Chemotaxis</keyword>
<keyword id="KW-0963">Cytoplasm</keyword>
<keyword id="KW-0378">Hydrolase</keyword>
<keyword id="KW-0597">Phosphoprotein</keyword>
<gene>
    <name evidence="1" type="primary">cheB3</name>
    <name type="ordered locus">Bcep18194_A3363</name>
</gene>
<accession>Q39KQ1</accession>
<organism>
    <name type="scientific">Burkholderia lata (strain ATCC 17760 / DSM 23089 / LMG 22485 / NCIMB 9086 / R18194 / 383)</name>
    <dbReference type="NCBI Taxonomy" id="482957"/>
    <lineage>
        <taxon>Bacteria</taxon>
        <taxon>Pseudomonadati</taxon>
        <taxon>Pseudomonadota</taxon>
        <taxon>Betaproteobacteria</taxon>
        <taxon>Burkholderiales</taxon>
        <taxon>Burkholderiaceae</taxon>
        <taxon>Burkholderia</taxon>
        <taxon>Burkholderia cepacia complex</taxon>
    </lineage>
</organism>
<name>CHEB3_BURL3</name>
<sequence length="363" mass="39053">MTAVQKIKVLCVDDSALIRSLMTEIINSQPDMTVCATAPDPLVARELIKQHNPDVLTLDVEMPRMDGLDFLEKLMRLRPMPVVMVSSLTERGSEITLRALELGAVDFVTKPRVGIRDGMLDYAEKLADKIRAASRARVRQAPQPQAVARAADSHPAAPMINNPLVSTEKLIIIGASTGGTEAIREVLTPLPPDAPAVLIAQHMPPGFTKSFAQRLNGLCRIAVKEAEHGERVLPGHAYIAPGHAHLLLARSGANYIAQLSDEPPVNRHRPSVDVLFRSAATHAGKNAIGVILTGMGRDGAAGLLEMKRAGAHTFAQDEASCIVFGMPREAIALGGADEIVPLAEMSRRVMARLATMGDRVQRV</sequence>